<dbReference type="EMBL" id="ABSU01000013">
    <property type="protein sequence ID" value="EFE32757.1"/>
    <property type="molecule type" value="Genomic_DNA"/>
</dbReference>
<dbReference type="RefSeq" id="XP_003013397.1">
    <property type="nucleotide sequence ID" value="XM_003013351.1"/>
</dbReference>
<dbReference type="SMR" id="D4AVK1"/>
<dbReference type="STRING" id="663331.D4AVK1"/>
<dbReference type="GeneID" id="9519433"/>
<dbReference type="KEGG" id="abe:ARB_00215"/>
<dbReference type="eggNOG" id="ENOG502QV3R">
    <property type="taxonomic scope" value="Eukaryota"/>
</dbReference>
<dbReference type="HOGENOM" id="CLU_011918_1_0_1"/>
<dbReference type="OMA" id="KWEFEAR"/>
<dbReference type="OrthoDB" id="289228at2759"/>
<dbReference type="Proteomes" id="UP000008866">
    <property type="component" value="Unassembled WGS sequence"/>
</dbReference>
<dbReference type="GO" id="GO:0005737">
    <property type="term" value="C:cytoplasm"/>
    <property type="evidence" value="ECO:0007669"/>
    <property type="project" value="UniProtKB-SubCell"/>
</dbReference>
<dbReference type="InterPro" id="IPR006571">
    <property type="entry name" value="TLDc_dom"/>
</dbReference>
<dbReference type="Pfam" id="PF07534">
    <property type="entry name" value="TLD"/>
    <property type="match status" value="1"/>
</dbReference>
<dbReference type="SMART" id="SM00584">
    <property type="entry name" value="TLDc"/>
    <property type="match status" value="1"/>
</dbReference>
<dbReference type="PROSITE" id="PS51886">
    <property type="entry name" value="TLDC"/>
    <property type="match status" value="1"/>
</dbReference>
<sequence>MGAGQSTNTSGHGASPEEMSRILAHRFASKCFTPLELTHLKDNFYSLALKQGDIHYWNEEVLSRFLGIPDGDEKFGLGTLDAGPVIFRMVSYLGAFPFQNTLAPSVLTFDAMVKVIVLLTDRYGKVLRRGKKDRIKLLFGSLADIGRKEASPITSGDKSDNDQGRPKTRSDEAGFSVDKPSNDADDYNDDDDLVLAALESLDAIEVFKHDQRIDRTAYEAHISFDTFQRLLMLFVVIAPLQSCEKTSEYFSQLNEESLKSARYCVENILTSFDIGDRTKGIDYETFYWVISTSLPYMFDPLTPLFEHLLFSKNLDLSRRKDSGTCSVSEEKQKKTEFCISPSHPPIILPGSFKPCILDSAVISHLSFFLSTSFPTPNLLQNGTRLHGVFSSDTHGESLTSFSHNVLTWDAPSILLVTGSINHSSGDEADIITVGAYIPQPWKLPASTSTSHYDTSHQSQLPYLFQLSPRYAVMQGSPSINSLKPNLPVVSFSTKSGIAIGCKIPPPTRTSMDSSRPTPAGSGSLWIDPALENAEFVMSNGLSHEEGVFLPPGIARWSPSRPPSKAESETIKISIYNIEVWGVVQTAPTPAQSPYHSRTSTANGDIPDAVARQQANWNFEAREAERRREIHLNVGGGDSEEQTGRALLEMAGIIGDSARRR</sequence>
<evidence type="ECO:0000250" key="1"/>
<evidence type="ECO:0000255" key="2">
    <source>
        <dbReference type="PROSITE-ProRule" id="PRU01234"/>
    </source>
</evidence>
<evidence type="ECO:0000256" key="3">
    <source>
        <dbReference type="SAM" id="MobiDB-lite"/>
    </source>
</evidence>
<evidence type="ECO:0000305" key="4"/>
<name>RTC5_ARTBC</name>
<accession>D4AVK1</accession>
<protein>
    <recommendedName>
        <fullName>Restriction of telomere capping protein 5</fullName>
    </recommendedName>
</protein>
<feature type="chain" id="PRO_0000408809" description="Restriction of telomere capping protein 5">
    <location>
        <begin position="1"/>
        <end position="660"/>
    </location>
</feature>
<feature type="domain" description="TLDc" evidence="2">
    <location>
        <begin position="355"/>
        <end position="583"/>
    </location>
</feature>
<feature type="region of interest" description="Disordered" evidence="3">
    <location>
        <begin position="150"/>
        <end position="187"/>
    </location>
</feature>
<feature type="compositionally biased region" description="Basic and acidic residues" evidence="3">
    <location>
        <begin position="157"/>
        <end position="172"/>
    </location>
</feature>
<proteinExistence type="inferred from homology"/>
<keyword id="KW-0963">Cytoplasm</keyword>
<keyword id="KW-1185">Reference proteome</keyword>
<comment type="function">
    <text evidence="1">May be involved in a process influencing telomere capping.</text>
</comment>
<comment type="subcellular location">
    <subcellularLocation>
        <location evidence="1">Cytoplasm</location>
    </subcellularLocation>
</comment>
<comment type="similarity">
    <text evidence="4">Belongs to the RTC5 family.</text>
</comment>
<reference key="1">
    <citation type="journal article" date="2011" name="Genome Biol.">
        <title>Comparative and functional genomics provide insights into the pathogenicity of dermatophytic fungi.</title>
        <authorList>
            <person name="Burmester A."/>
            <person name="Shelest E."/>
            <person name="Gloeckner G."/>
            <person name="Heddergott C."/>
            <person name="Schindler S."/>
            <person name="Staib P."/>
            <person name="Heidel A."/>
            <person name="Felder M."/>
            <person name="Petzold A."/>
            <person name="Szafranski K."/>
            <person name="Feuermann M."/>
            <person name="Pedruzzi I."/>
            <person name="Priebe S."/>
            <person name="Groth M."/>
            <person name="Winkler R."/>
            <person name="Li W."/>
            <person name="Kniemeyer O."/>
            <person name="Schroeckh V."/>
            <person name="Hertweck C."/>
            <person name="Hube B."/>
            <person name="White T.C."/>
            <person name="Platzer M."/>
            <person name="Guthke R."/>
            <person name="Heitman J."/>
            <person name="Woestemeyer J."/>
            <person name="Zipfel P.F."/>
            <person name="Monod M."/>
            <person name="Brakhage A.A."/>
        </authorList>
    </citation>
    <scope>NUCLEOTIDE SEQUENCE [LARGE SCALE GENOMIC DNA]</scope>
    <source>
        <strain>ATCC MYA-4681 / CBS 112371</strain>
    </source>
</reference>
<organism>
    <name type="scientific">Arthroderma benhamiae (strain ATCC MYA-4681 / CBS 112371)</name>
    <name type="common">Trichophyton mentagrophytes</name>
    <dbReference type="NCBI Taxonomy" id="663331"/>
    <lineage>
        <taxon>Eukaryota</taxon>
        <taxon>Fungi</taxon>
        <taxon>Dikarya</taxon>
        <taxon>Ascomycota</taxon>
        <taxon>Pezizomycotina</taxon>
        <taxon>Eurotiomycetes</taxon>
        <taxon>Eurotiomycetidae</taxon>
        <taxon>Onygenales</taxon>
        <taxon>Arthrodermataceae</taxon>
        <taxon>Trichophyton</taxon>
    </lineage>
</organism>
<gene>
    <name type="primary">RTC5</name>
    <name type="ORF">ARB_00215</name>
</gene>